<organism>
    <name type="scientific">Human T-cell leukemia virus 2</name>
    <name type="common">HTLV-2</name>
    <dbReference type="NCBI Taxonomy" id="11909"/>
    <lineage>
        <taxon>Viruses</taxon>
        <taxon>Riboviria</taxon>
        <taxon>Pararnavirae</taxon>
        <taxon>Artverviricota</taxon>
        <taxon>Revtraviricetes</taxon>
        <taxon>Ortervirales</taxon>
        <taxon>Retroviridae</taxon>
        <taxon>Orthoretrovirinae</taxon>
        <taxon>Deltaretrovirus</taxon>
        <taxon>Primate T-lymphotropic virus 2</taxon>
    </lineage>
</organism>
<gene>
    <name type="primary">gag-pro-pol</name>
</gene>
<evidence type="ECO:0000250" key="1"/>
<evidence type="ECO:0000250" key="2">
    <source>
        <dbReference type="UniProtKB" id="P03345"/>
    </source>
</evidence>
<evidence type="ECO:0000250" key="3">
    <source>
        <dbReference type="UniProtKB" id="P03362"/>
    </source>
</evidence>
<evidence type="ECO:0000255" key="4"/>
<evidence type="ECO:0000255" key="5">
    <source>
        <dbReference type="PROSITE-ProRule" id="PRU00047"/>
    </source>
</evidence>
<evidence type="ECO:0000255" key="6">
    <source>
        <dbReference type="PROSITE-ProRule" id="PRU00275"/>
    </source>
</evidence>
<evidence type="ECO:0000255" key="7">
    <source>
        <dbReference type="PROSITE-ProRule" id="PRU00405"/>
    </source>
</evidence>
<evidence type="ECO:0000255" key="8">
    <source>
        <dbReference type="PROSITE-ProRule" id="PRU00408"/>
    </source>
</evidence>
<evidence type="ECO:0000255" key="9">
    <source>
        <dbReference type="PROSITE-ProRule" id="PRU00457"/>
    </source>
</evidence>
<evidence type="ECO:0000255" key="10">
    <source>
        <dbReference type="PROSITE-ProRule" id="PRU00506"/>
    </source>
</evidence>
<evidence type="ECO:0000255" key="11">
    <source>
        <dbReference type="PROSITE-ProRule" id="PRU10094"/>
    </source>
</evidence>
<evidence type="ECO:0000256" key="12">
    <source>
        <dbReference type="SAM" id="MobiDB-lite"/>
    </source>
</evidence>
<evidence type="ECO:0000269" key="13">
    <source>
    </source>
</evidence>
<evidence type="ECO:0000269" key="14">
    <source>
    </source>
</evidence>
<evidence type="ECO:0000269" key="15">
    <source>
    </source>
</evidence>
<evidence type="ECO:0000305" key="16"/>
<evidence type="ECO:0000305" key="17">
    <source>
    </source>
</evidence>
<evidence type="ECO:0007829" key="18">
    <source>
        <dbReference type="PDB" id="1JVR"/>
    </source>
</evidence>
<evidence type="ECO:0007829" key="19">
    <source>
        <dbReference type="PDB" id="6QBT"/>
    </source>
</evidence>
<accession>P03363</accession>
<dbReference type="EC" id="3.4.23.-" evidence="6"/>
<dbReference type="EC" id="2.7.7.49" evidence="7"/>
<dbReference type="EC" id="2.7.7.7" evidence="7"/>
<dbReference type="EC" id="3.1.26.4" evidence="8"/>
<dbReference type="EC" id="2.7.7.-" evidence="17"/>
<dbReference type="EC" id="3.1.-.-" evidence="17"/>
<dbReference type="EMBL" id="M10060">
    <property type="protein sequence ID" value="AAB59885.1"/>
    <property type="status" value="ALT_SEQ"/>
    <property type="molecule type" value="Genomic_DNA"/>
</dbReference>
<dbReference type="PIR" id="A03962">
    <property type="entry name" value="GNLJH2"/>
</dbReference>
<dbReference type="RefSeq" id="NP_041003.3">
    <property type="nucleotide sequence ID" value="NC_001488.1"/>
</dbReference>
<dbReference type="PDB" id="1JVR">
    <property type="method" value="NMR"/>
    <property type="chains" value="A=1-136"/>
</dbReference>
<dbReference type="PDB" id="6QBT">
    <property type="method" value="X-ray"/>
    <property type="resolution" value="2.29 A"/>
    <property type="chains" value="A=1217-1385"/>
</dbReference>
<dbReference type="PDB" id="6QBV">
    <property type="method" value="X-ray"/>
    <property type="resolution" value="2.45 A"/>
    <property type="chains" value="A/B/C/D=1217-1380"/>
</dbReference>
<dbReference type="PDB" id="6QBW">
    <property type="method" value="X-ray"/>
    <property type="resolution" value="2.40 A"/>
    <property type="chains" value="A=1217-1385"/>
</dbReference>
<dbReference type="PDBsum" id="1JVR"/>
<dbReference type="PDBsum" id="6QBT"/>
<dbReference type="PDBsum" id="6QBV"/>
<dbReference type="PDBsum" id="6QBW"/>
<dbReference type="SMR" id="P03363"/>
<dbReference type="IntAct" id="P03363">
    <property type="interactions" value="8"/>
</dbReference>
<dbReference type="MINT" id="P03363"/>
<dbReference type="KEGG" id="vg:1491941"/>
<dbReference type="EvolutionaryTrace" id="P03363"/>
<dbReference type="Proteomes" id="UP000009254">
    <property type="component" value="Genome"/>
</dbReference>
<dbReference type="GO" id="GO:0019013">
    <property type="term" value="C:viral nucleocapsid"/>
    <property type="evidence" value="ECO:0007669"/>
    <property type="project" value="UniProtKB-KW"/>
</dbReference>
<dbReference type="GO" id="GO:0004190">
    <property type="term" value="F:aspartic-type endopeptidase activity"/>
    <property type="evidence" value="ECO:0007669"/>
    <property type="project" value="UniProtKB-KW"/>
</dbReference>
<dbReference type="GO" id="GO:0003677">
    <property type="term" value="F:DNA binding"/>
    <property type="evidence" value="ECO:0007669"/>
    <property type="project" value="UniProtKB-KW"/>
</dbReference>
<dbReference type="GO" id="GO:0003887">
    <property type="term" value="F:DNA-directed DNA polymerase activity"/>
    <property type="evidence" value="ECO:0007669"/>
    <property type="project" value="UniProtKB-EC"/>
</dbReference>
<dbReference type="GO" id="GO:0035613">
    <property type="term" value="F:RNA stem-loop binding"/>
    <property type="evidence" value="ECO:0007669"/>
    <property type="project" value="TreeGrafter"/>
</dbReference>
<dbReference type="GO" id="GO:0003964">
    <property type="term" value="F:RNA-directed DNA polymerase activity"/>
    <property type="evidence" value="ECO:0007669"/>
    <property type="project" value="UniProtKB-KW"/>
</dbReference>
<dbReference type="GO" id="GO:0004523">
    <property type="term" value="F:RNA-DNA hybrid ribonuclease activity"/>
    <property type="evidence" value="ECO:0007669"/>
    <property type="project" value="UniProtKB-EC"/>
</dbReference>
<dbReference type="GO" id="GO:0005198">
    <property type="term" value="F:structural molecule activity"/>
    <property type="evidence" value="ECO:0007669"/>
    <property type="project" value="InterPro"/>
</dbReference>
<dbReference type="GO" id="GO:0008270">
    <property type="term" value="F:zinc ion binding"/>
    <property type="evidence" value="ECO:0007669"/>
    <property type="project" value="UniProtKB-KW"/>
</dbReference>
<dbReference type="GO" id="GO:0015074">
    <property type="term" value="P:DNA integration"/>
    <property type="evidence" value="ECO:0007669"/>
    <property type="project" value="UniProtKB-KW"/>
</dbReference>
<dbReference type="GO" id="GO:0006310">
    <property type="term" value="P:DNA recombination"/>
    <property type="evidence" value="ECO:0007669"/>
    <property type="project" value="UniProtKB-KW"/>
</dbReference>
<dbReference type="GO" id="GO:0075713">
    <property type="term" value="P:establishment of integrated proviral latency"/>
    <property type="evidence" value="ECO:0007669"/>
    <property type="project" value="UniProtKB-KW"/>
</dbReference>
<dbReference type="GO" id="GO:0006508">
    <property type="term" value="P:proteolysis"/>
    <property type="evidence" value="ECO:0007669"/>
    <property type="project" value="UniProtKB-KW"/>
</dbReference>
<dbReference type="GO" id="GO:0046718">
    <property type="term" value="P:symbiont entry into host cell"/>
    <property type="evidence" value="ECO:0007669"/>
    <property type="project" value="UniProtKB-KW"/>
</dbReference>
<dbReference type="GO" id="GO:0039657">
    <property type="term" value="P:symbiont-mediated suppression of host gene expression"/>
    <property type="evidence" value="ECO:0007669"/>
    <property type="project" value="UniProtKB-KW"/>
</dbReference>
<dbReference type="GO" id="GO:0044826">
    <property type="term" value="P:viral genome integration into host DNA"/>
    <property type="evidence" value="ECO:0007669"/>
    <property type="project" value="UniProtKB-KW"/>
</dbReference>
<dbReference type="GO" id="GO:0075523">
    <property type="term" value="P:viral translational frameshifting"/>
    <property type="evidence" value="ECO:0007669"/>
    <property type="project" value="UniProtKB-KW"/>
</dbReference>
<dbReference type="Gene3D" id="1.10.1200.30">
    <property type="match status" value="1"/>
</dbReference>
<dbReference type="Gene3D" id="3.30.70.270">
    <property type="match status" value="2"/>
</dbReference>
<dbReference type="Gene3D" id="2.40.70.10">
    <property type="entry name" value="Acid Proteases"/>
    <property type="match status" value="1"/>
</dbReference>
<dbReference type="Gene3D" id="1.10.185.10">
    <property type="entry name" value="Delta-retroviral matrix"/>
    <property type="match status" value="1"/>
</dbReference>
<dbReference type="Gene3D" id="3.10.10.10">
    <property type="entry name" value="HIV Type 1 Reverse Transcriptase, subunit A, domain 1"/>
    <property type="match status" value="1"/>
</dbReference>
<dbReference type="Gene3D" id="1.10.375.10">
    <property type="entry name" value="Human Immunodeficiency Virus Type 1 Capsid Protein"/>
    <property type="match status" value="1"/>
</dbReference>
<dbReference type="Gene3D" id="3.30.420.10">
    <property type="entry name" value="Ribonuclease H-like superfamily/Ribonuclease H"/>
    <property type="match status" value="2"/>
</dbReference>
<dbReference type="Gene3D" id="4.10.60.10">
    <property type="entry name" value="Zinc finger, CCHC-type"/>
    <property type="match status" value="1"/>
</dbReference>
<dbReference type="InterPro" id="IPR001969">
    <property type="entry name" value="Aspartic_peptidase_AS"/>
</dbReference>
<dbReference type="InterPro" id="IPR003139">
    <property type="entry name" value="D_retro_matrix"/>
</dbReference>
<dbReference type="InterPro" id="IPR043502">
    <property type="entry name" value="DNA/RNA_pol_sf"/>
</dbReference>
<dbReference type="InterPro" id="IPR045345">
    <property type="entry name" value="Gag_p24_C"/>
</dbReference>
<dbReference type="InterPro" id="IPR036862">
    <property type="entry name" value="Integrase_C_dom_sf_retrovir"/>
</dbReference>
<dbReference type="InterPro" id="IPR001037">
    <property type="entry name" value="Integrase_C_retrovir"/>
</dbReference>
<dbReference type="InterPro" id="IPR001584">
    <property type="entry name" value="Integrase_cat-core"/>
</dbReference>
<dbReference type="InterPro" id="IPR003308">
    <property type="entry name" value="Integrase_Zn-bd_dom_N"/>
</dbReference>
<dbReference type="InterPro" id="IPR001995">
    <property type="entry name" value="Peptidase_A2_cat"/>
</dbReference>
<dbReference type="InterPro" id="IPR021109">
    <property type="entry name" value="Peptidase_aspartic_dom_sf"/>
</dbReference>
<dbReference type="InterPro" id="IPR018061">
    <property type="entry name" value="Retropepsins"/>
</dbReference>
<dbReference type="InterPro" id="IPR008916">
    <property type="entry name" value="Retrov_capsid_C"/>
</dbReference>
<dbReference type="InterPro" id="IPR008919">
    <property type="entry name" value="Retrov_capsid_N"/>
</dbReference>
<dbReference type="InterPro" id="IPR010999">
    <property type="entry name" value="Retrovr_matrix"/>
</dbReference>
<dbReference type="InterPro" id="IPR043128">
    <property type="entry name" value="Rev_trsase/Diguanyl_cyclase"/>
</dbReference>
<dbReference type="InterPro" id="IPR012337">
    <property type="entry name" value="RNaseH-like_sf"/>
</dbReference>
<dbReference type="InterPro" id="IPR002156">
    <property type="entry name" value="RNaseH_domain"/>
</dbReference>
<dbReference type="InterPro" id="IPR036397">
    <property type="entry name" value="RNaseH_sf"/>
</dbReference>
<dbReference type="InterPro" id="IPR000477">
    <property type="entry name" value="RT_dom"/>
</dbReference>
<dbReference type="InterPro" id="IPR001878">
    <property type="entry name" value="Znf_CCHC"/>
</dbReference>
<dbReference type="InterPro" id="IPR036875">
    <property type="entry name" value="Znf_CCHC_sf"/>
</dbReference>
<dbReference type="PANTHER" id="PTHR41694">
    <property type="entry name" value="ENDOGENOUS RETROVIRUS GROUP K MEMBER POL PROTEIN"/>
    <property type="match status" value="1"/>
</dbReference>
<dbReference type="PANTHER" id="PTHR41694:SF3">
    <property type="entry name" value="RNA-DIRECTED DNA POLYMERASE-RELATED"/>
    <property type="match status" value="1"/>
</dbReference>
<dbReference type="Pfam" id="PF02228">
    <property type="entry name" value="Gag_p19"/>
    <property type="match status" value="1"/>
</dbReference>
<dbReference type="Pfam" id="PF00607">
    <property type="entry name" value="Gag_p24"/>
    <property type="match status" value="1"/>
</dbReference>
<dbReference type="Pfam" id="PF19317">
    <property type="entry name" value="Gag_p24_C"/>
    <property type="match status" value="1"/>
</dbReference>
<dbReference type="Pfam" id="PF00552">
    <property type="entry name" value="IN_DBD_C"/>
    <property type="match status" value="1"/>
</dbReference>
<dbReference type="Pfam" id="PF02022">
    <property type="entry name" value="Integrase_Zn"/>
    <property type="match status" value="1"/>
</dbReference>
<dbReference type="Pfam" id="PF00075">
    <property type="entry name" value="RNase_H"/>
    <property type="match status" value="1"/>
</dbReference>
<dbReference type="Pfam" id="PF00665">
    <property type="entry name" value="rve"/>
    <property type="match status" value="1"/>
</dbReference>
<dbReference type="Pfam" id="PF00077">
    <property type="entry name" value="RVP"/>
    <property type="match status" value="1"/>
</dbReference>
<dbReference type="Pfam" id="PF00078">
    <property type="entry name" value="RVT_1"/>
    <property type="match status" value="1"/>
</dbReference>
<dbReference type="Pfam" id="PF00098">
    <property type="entry name" value="zf-CCHC"/>
    <property type="match status" value="1"/>
</dbReference>
<dbReference type="SMART" id="SM00343">
    <property type="entry name" value="ZnF_C2HC"/>
    <property type="match status" value="2"/>
</dbReference>
<dbReference type="SUPFAM" id="SSF50630">
    <property type="entry name" value="Acid proteases"/>
    <property type="match status" value="1"/>
</dbReference>
<dbReference type="SUPFAM" id="SSF50122">
    <property type="entry name" value="DNA-binding domain of retroviral integrase"/>
    <property type="match status" value="1"/>
</dbReference>
<dbReference type="SUPFAM" id="SSF56672">
    <property type="entry name" value="DNA/RNA polymerases"/>
    <property type="match status" value="1"/>
</dbReference>
<dbReference type="SUPFAM" id="SSF47836">
    <property type="entry name" value="Retroviral matrix proteins"/>
    <property type="match status" value="1"/>
</dbReference>
<dbReference type="SUPFAM" id="SSF47353">
    <property type="entry name" value="Retrovirus capsid dimerization domain-like"/>
    <property type="match status" value="1"/>
</dbReference>
<dbReference type="SUPFAM" id="SSF47943">
    <property type="entry name" value="Retrovirus capsid protein, N-terminal core domain"/>
    <property type="match status" value="1"/>
</dbReference>
<dbReference type="SUPFAM" id="SSF57756">
    <property type="entry name" value="Retrovirus zinc finger-like domains"/>
    <property type="match status" value="1"/>
</dbReference>
<dbReference type="SUPFAM" id="SSF53098">
    <property type="entry name" value="Ribonuclease H-like"/>
    <property type="match status" value="1"/>
</dbReference>
<dbReference type="PROSITE" id="PS50175">
    <property type="entry name" value="ASP_PROT_RETROV"/>
    <property type="match status" value="1"/>
</dbReference>
<dbReference type="PROSITE" id="PS00141">
    <property type="entry name" value="ASP_PROTEASE"/>
    <property type="match status" value="1"/>
</dbReference>
<dbReference type="PROSITE" id="PS50994">
    <property type="entry name" value="INTEGRASE"/>
    <property type="match status" value="1"/>
</dbReference>
<dbReference type="PROSITE" id="PS51027">
    <property type="entry name" value="INTEGRASE_DBD"/>
    <property type="match status" value="1"/>
</dbReference>
<dbReference type="PROSITE" id="PS50879">
    <property type="entry name" value="RNASE_H_1"/>
    <property type="match status" value="1"/>
</dbReference>
<dbReference type="PROSITE" id="PS50878">
    <property type="entry name" value="RT_POL"/>
    <property type="match status" value="1"/>
</dbReference>
<dbReference type="PROSITE" id="PS50158">
    <property type="entry name" value="ZF_CCHC"/>
    <property type="match status" value="1"/>
</dbReference>
<organismHost>
    <name type="scientific">Homo sapiens</name>
    <name type="common">Human</name>
    <dbReference type="NCBI Taxonomy" id="9606"/>
</organismHost>
<name>POL_HTLV2</name>
<comment type="function">
    <molecule>Gag-Pro-Pol polyprotein</molecule>
    <text evidence="2">The matrix domain targets Gag, Gag-Pro and Gag-Pro-Pol polyproteins to the plasma membrane via a multipartite membrane binding signal, that includes its myristoylated N-terminus.</text>
</comment>
<comment type="function">
    <molecule>Matrix protein p19</molecule>
    <text evidence="2">Matrix protein.</text>
</comment>
<comment type="function">
    <molecule>Capsid protein p24</molecule>
    <text evidence="3">Forms the spherical core of the virus that encapsulates the genomic RNA-nucleocapsid complex.</text>
</comment>
<comment type="function">
    <molecule>Nucleocapsid protein p15-pro</molecule>
    <text evidence="2">Binds strongly to viral nucleic acids and promote their aggregation. Also destabilizes the nucleic acids duplexes via highly structured zinc-binding motifs.</text>
</comment>
<comment type="function">
    <molecule>Protease</molecule>
    <text evidence="3 6">The aspartyl protease mediates proteolytic cleavages of Gag and Gag-Pol polyproteins during or shortly after the release of the virion from the plasma membrane. Cleavages take place as an ordered, step-wise cascade to yield mature proteins. This process is called maturation. Displays maximal activity during the budding process just prior to particle release from the cell (Potential). Cleaves the translation initiation factor eIF4G leading to the inhibition of host cap-dependent translation (By similarity).</text>
</comment>
<comment type="function">
    <molecule>Reverse transcriptase/ribonuclease H</molecule>
    <text evidence="1">RT is a multifunctional enzyme that converts the viral RNA genome into dsDNA in the cytoplasm, shortly after virus entry into the cell. This enzyme displays a DNA polymerase activity that can copy either DNA or RNA templates, and a ribonuclease H (RNase H) activity that cleaves the RNA strand of RNA-DNA heteroduplexes in a partially processive 3' to 5'-endonucleasic mode. Conversion of viral genomic RNA into dsDNA requires many steps. A tRNA-Pro binds to the primer-binding site (PBS) situated at the 5'-end of the viral RNA. RT uses the 3' end of the tRNA primer to perform a short round of RNA-dependent minus-strand DNA synthesis. The reading proceeds through the U5 region and ends after the repeated (R) region which is present at both ends of viral RNA. The portion of the RNA-DNA heteroduplex is digested by the RNase H, resulting in a ssDNA product attached to the tRNA primer. This ssDNA/tRNA hybridizes with the identical R region situated at the 3' end of viral RNA. This template exchange, known as minus-strand DNA strong stop transfer, can be either intra- or intermolecular. RT uses the 3' end of this newly synthesized short ssDNA to perform the RNA-dependent minus-strand DNA synthesis of the whole template. RNase H digests the RNA template except for a polypurine tract (PPT) situated at the 5' end of the genome. It is not clear if both polymerase and RNase H activities are simultaneous. RNase H probably can proceed both in a polymerase-dependent (RNA cut into small fragments by the same RT performing DNA synthesis) and a polymerase-independent mode (cleavage of remaining RNA fragments by free RTs). Secondly, RT performs DNA-directed plus-strand DNA synthesis using the PPT that has not been removed by RNase H as primer. PPT and tRNA primers are then removed by RNase H. The 3' and 5' ssDNA PBS regions hybridize to form a circular dsDNA intermediate. Strand displacement synthesis by RT to the PBS and PPT ends produces a blunt ended, linear dsDNA copy of the viral genome that includes long terminal repeats (LTRs) at both ends (By similarity).</text>
</comment>
<comment type="function">
    <molecule>Integrase</molecule>
    <text evidence="17">Catalyzes viral DNA integration into the host chromosome, by performing a series of DNA cutting and joining reactions.</text>
</comment>
<comment type="catalytic activity">
    <reaction evidence="8">
        <text>Endonucleolytic cleavage to 5'-phosphomonoester.</text>
        <dbReference type="EC" id="3.1.26.4"/>
    </reaction>
</comment>
<comment type="catalytic activity">
    <reaction evidence="7">
        <text>DNA(n) + a 2'-deoxyribonucleoside 5'-triphosphate = DNA(n+1) + diphosphate</text>
        <dbReference type="Rhea" id="RHEA:22508"/>
        <dbReference type="Rhea" id="RHEA-COMP:17339"/>
        <dbReference type="Rhea" id="RHEA-COMP:17340"/>
        <dbReference type="ChEBI" id="CHEBI:33019"/>
        <dbReference type="ChEBI" id="CHEBI:61560"/>
        <dbReference type="ChEBI" id="CHEBI:173112"/>
        <dbReference type="EC" id="2.7.7.49"/>
    </reaction>
</comment>
<comment type="catalytic activity">
    <reaction evidence="7">
        <text>DNA(n) + a 2'-deoxyribonucleoside 5'-triphosphate = DNA(n+1) + diphosphate</text>
        <dbReference type="Rhea" id="RHEA:22508"/>
        <dbReference type="Rhea" id="RHEA-COMP:17339"/>
        <dbReference type="Rhea" id="RHEA-COMP:17340"/>
        <dbReference type="ChEBI" id="CHEBI:33019"/>
        <dbReference type="ChEBI" id="CHEBI:61560"/>
        <dbReference type="ChEBI" id="CHEBI:173112"/>
        <dbReference type="EC" id="2.7.7.7"/>
    </reaction>
</comment>
<comment type="cofactor">
    <cofactor evidence="7">
        <name>Mg(2+)</name>
        <dbReference type="ChEBI" id="CHEBI:18420"/>
    </cofactor>
    <text evidence="7">The RT polymerase active site binds 2 magnesium ions.</text>
</comment>
<comment type="cofactor">
    <cofactor evidence="1">
        <name>Mg(2+)</name>
        <dbReference type="ChEBI" id="CHEBI:18420"/>
    </cofactor>
    <text evidence="1">Binds 2 magnesium ions for ribonuclease H (RNase H) activity.</text>
</comment>
<comment type="subunit">
    <molecule>Gag-Pro-Pol polyprotein</molecule>
    <text evidence="2">Homodimer; the homodimers are part of the immature particles. Interacts with human TSG101 and NEDD4; these interactions are essential for budding and release of viral particles.</text>
</comment>
<comment type="subunit">
    <molecule>Matrix protein p19</molecule>
    <text evidence="2">Homodimer; further assembles as homohexamers.</text>
</comment>
<comment type="interaction">
    <interactant intactId="EBI-9676133">
        <id>P03363</id>
    </interactant>
    <interactant intactId="EBI-2804934">
        <id>O14770</id>
        <label>MEIS2</label>
    </interactant>
    <organismsDiffer>true</organismsDiffer>
    <experiments>3</experiments>
</comment>
<comment type="subcellular location">
    <molecule>Matrix protein p19</molecule>
    <subcellularLocation>
        <location evidence="2">Virion</location>
    </subcellularLocation>
</comment>
<comment type="subcellular location">
    <molecule>Capsid protein p24</molecule>
    <subcellularLocation>
        <location evidence="2">Virion</location>
    </subcellularLocation>
</comment>
<comment type="subcellular location">
    <molecule>Nucleocapsid protein p15-pro</molecule>
    <subcellularLocation>
        <location evidence="2">Virion</location>
    </subcellularLocation>
</comment>
<comment type="alternative products">
    <event type="ribosomal frameshifting"/>
    <isoform>
        <id>P03363-1</id>
        <name>Gag-Pro-Pol polyprotein</name>
        <sequence type="displayed"/>
    </isoform>
    <isoform>
        <id>P03353-1</id>
        <name>Gag-Pro polyprotein</name>
        <sequence type="external"/>
    </isoform>
    <isoform>
        <id>P03346-1</id>
        <name>Gag polyprotein</name>
        <sequence type="external"/>
    </isoform>
    <text evidence="16">This strategy of translation probably allows the virus to modulate the quantity of each viral protein.</text>
</comment>
<comment type="domain">
    <text evidence="2">Gag polyprotein: Late-budding domains (L domains) are short sequence motifs essential for viral particle release. They can occur individually or in close proximity within structural proteins. They interacts with sorting cellular proteins of the multivesicular body (MVB) pathway. Most of these proteins are class E vacuolar protein sorting factors belonging to ESCRT-I, ESCRT-II or ESCRT-III complexes. Matrix protein p19 contains two L domains: a PTAP/PSAP motif which interacts with the UEV domain of TSG101, and a PPXY motif which binds to the WW domains of the ubiquitin ligase NEDD4.</text>
</comment>
<comment type="domain">
    <molecule>Capsid protein p24</molecule>
    <text evidence="3">The capsid protein N-terminus seems to be involved in Gag-Gag interactions.</text>
</comment>
<comment type="PTM">
    <molecule>Matrix protein p19</molecule>
    <text evidence="2">Phosphorylation of the matrix protein p19 by MAPK1 seems to play a role in budding.</text>
</comment>
<comment type="PTM">
    <molecule>Gag-Pro-Pol polyprotein</molecule>
    <text evidence="2">Myristoylated. Myristoylation of the matrix (MA) domain mediates the transport and binding of Gag polyproteins to the host plasma membrane and is required for the assembly of viral particles.</text>
</comment>
<comment type="PTM">
    <molecule>Gag-Pro-Pol polyprotein</molecule>
    <text evidence="3">Specific enzymatic cleavages by the viral protease yield mature proteins. The polyprotein is cleaved during and after budding, this process is termed maturation. The protease is autoproteolytically processed at its N- and C-termini.</text>
</comment>
<comment type="miscellaneous">
    <text evidence="7">The reverse transcriptase is an error-prone enzyme that lacks a proof-reading function. High mutations rate is a direct consequence of this characteristic. RT also displays frequent template switching leading to high recombination rate. Recombination mostly occurs between homologous regions of the two copackaged RNA genomes. If these two RNA molecules derive from different viral strains, reverse transcription will give rise to highly recombinated proviral DNAs.</text>
</comment>
<comment type="miscellaneous">
    <molecule>Isoform Gag-Pro-Pol polyprotein</molecule>
    <text evidence="13 14 15">Produced by -1 ribosomal frameshifting at the gag-pol genes boundary.</text>
</comment>
<reference key="1">
    <citation type="journal article" date="1985" name="Proc. Natl. Acad. Sci. U.S.A.">
        <title>Complete nucleotide sequence of an infectious clone of human T-cell leukemia virus type II: an open reading frame for the protease gene.</title>
        <authorList>
            <person name="Shimotohno K."/>
            <person name="Takahashi Y."/>
            <person name="Shimizu N."/>
            <person name="Gojobori T."/>
            <person name="Golde D.W."/>
            <person name="Chen I.S.Y."/>
            <person name="Miwa M."/>
            <person name="Sugimura T."/>
        </authorList>
    </citation>
    <scope>NUCLEOTIDE SEQUENCE [GENOMIC DNA]</scope>
</reference>
<reference key="2">
    <citation type="journal article" date="1989" name="J. Virol.">
        <title>Translation of gag, pro, and pol gene products of human T-cell leukemia virus type 2.</title>
        <authorList>
            <person name="Mador N."/>
            <person name="Panet A."/>
            <person name="Honigman A."/>
        </authorList>
    </citation>
    <scope>RIBOSOMAL FRAMESHIFT</scope>
</reference>
<reference key="3">
    <citation type="journal article" date="1993" name="J. Virol.">
        <title>Two cis-acting signals control ribosomal frameshift between human T-cell leukemia virus type II gag and pro genes.</title>
        <authorList>
            <person name="Falk H."/>
            <person name="Mador N."/>
            <person name="Udi R."/>
            <person name="Panet A."/>
            <person name="Honigman A."/>
        </authorList>
    </citation>
    <scope>RIBOSOMAL FRAMESHIFT</scope>
</reference>
<reference key="4">
    <citation type="journal article" date="1996" name="Virology">
        <title>Catalytic activities of the human T-cell leukemia virus type II integrase.</title>
        <authorList>
            <person name="Balakrishnan M."/>
            <person name="Zastrow D."/>
            <person name="Jonsson C.B."/>
        </authorList>
    </citation>
    <scope>FUNCTION (INTEGRASE)</scope>
</reference>
<reference key="5">
    <citation type="journal article" date="2001" name="Nucleic Acids Res.">
        <title>Comparative mutational analysis of cis-acting RNA signals for translational frameshifting in HIV-1 and HTLV-2.</title>
        <authorList>
            <person name="Kim Y.-G."/>
            <person name="Maas S."/>
            <person name="Rich A."/>
        </authorList>
    </citation>
    <scope>RIBOSOMAL FRAMESHIFT</scope>
</reference>
<reference key="6">
    <citation type="journal article" date="1996" name="J. Mol. Biol.">
        <title>Three-dimensional structure of the HTLV-II matrix protein and comparative analysis of matrix proteins from the different classes of pathogenic human retroviruses.</title>
        <authorList>
            <person name="Christensen A.M."/>
            <person name="Massiah M.A."/>
            <person name="Turner B.G."/>
            <person name="Sundquist W.I."/>
            <person name="Summers M.F."/>
        </authorList>
    </citation>
    <scope>STRUCTURE BY NMR OF 1-136</scope>
</reference>
<keyword id="KW-0002">3D-structure</keyword>
<keyword id="KW-0064">Aspartyl protease</keyword>
<keyword id="KW-0167">Capsid protein</keyword>
<keyword id="KW-0229">DNA integration</keyword>
<keyword id="KW-0233">DNA recombination</keyword>
<keyword id="KW-0238">DNA-binding</keyword>
<keyword id="KW-0255">Endonuclease</keyword>
<keyword id="KW-1262">Eukaryotic host gene expression shutoff by virus</keyword>
<keyword id="KW-1193">Eukaryotic host translation shutoff by virus</keyword>
<keyword id="KW-1190">Host gene expression shutoff by virus</keyword>
<keyword id="KW-0945">Host-virus interaction</keyword>
<keyword id="KW-0378">Hydrolase</keyword>
<keyword id="KW-0449">Lipoprotein</keyword>
<keyword id="KW-0460">Magnesium</keyword>
<keyword id="KW-0479">Metal-binding</keyword>
<keyword id="KW-0511">Multifunctional enzyme</keyword>
<keyword id="KW-0519">Myristate</keyword>
<keyword id="KW-0540">Nuclease</keyword>
<keyword id="KW-0548">Nucleotidyltransferase</keyword>
<keyword id="KW-0645">Protease</keyword>
<keyword id="KW-1185">Reference proteome</keyword>
<keyword id="KW-0677">Repeat</keyword>
<keyword id="KW-0688">Ribosomal frameshifting</keyword>
<keyword id="KW-0695">RNA-directed DNA polymerase</keyword>
<keyword id="KW-0808">Transferase</keyword>
<keyword id="KW-1179">Viral genome integration</keyword>
<keyword id="KW-0543">Viral nucleoprotein</keyword>
<keyword id="KW-0946">Virion</keyword>
<keyword id="KW-1160">Virus entry into host cell</keyword>
<keyword id="KW-0862">Zinc</keyword>
<keyword id="KW-0863">Zinc-finger</keyword>
<sequence>MGQIHGLSPTPIPKAPRGLSTHHWLNFLQAAYRLQPRPSDFDFQQLRRFLKLALKTPIWLNPIDYSLLASLIPKGYPGRVVEIINILVKNQVSPSAPAAPVPTPICPTTTPPPPPPPSPEAHVPPPYVEPTTTQCFPILHPPGAPSAHRPWQMKDLQAIKQEVSSSALGSPQFMQTLRLAVQQFDPTAKDLQDLLQYLCSSLVVSLHHQQLNTLITEAETRGMTGYNPMAGPLRMQANNPAQQGLRREYQNLWLAAFSTLPGNTRDPSWAAILQGLEEPYCAFVERLNVALDNGLPEGTPKEPILRSLAYSNANKECQKILQARGHTNSPLGEMLRTCQAWTPKDKTKVLVVQPRRPPPTQPCFRCGKVGHWSRDCTQPRPPPGPCPLCQDPSHWKRDCPQLKPPQEEGEPLLLDLPSTSGTTEEKNLLKGGDLISPHPDQDISILPLIPLRQQQQPILGVRISVMGQTPQPTQALLDTGADLTVIPQTLVPGPVKLHDTLILGASGQTNTQFKLLQTPLHIFLPFRRSPVILSSCLLDTHNKWTIIGRDALQQCQGLLYLPDDPSPHQLLPIATPNTIGLEHLPPPPQVDQFPLNLPERLQALNDLVSKALEAGHIEPYSGPGNNPVFPVKKPNGKWRFIHDLRATNAITTTLTSPSPGPPDLTSLPTALPHLQTIDLTDAFFQIPLPKQYQPYFAFTIPQPCNYGPGTRYAWTVLPQGFKNSPTLFEQQLAAVLNPMRKMFPTSTIVQYMDDILLASPTNEELQQLSQLTLQALTTHGLPISQEKTQQTPGQIRFLGQVISPNHITYESTPTIPIKSQWTLTELQVILGEIQWVSKGTPILRKHLQSLYSALHGYRDPRACITLTPQQLHALHAIQQALQHNCRGRLNPALPLLGLISLSTSGTTSVIFQPKQNWPLAWLHTPHPPTSLCPWGHLLACTILTLDKYTLQHYGQLCQSFHHNMSKQALCDFLRNSPHPSVGILIHHMGRFHNLGSQPSGPWKTLLHLPTLLQEPRLLRPIFTLSPVVLDTAPCLFSDGSPQKAAYVLWDQTILQQDITPLPSHETHSAQKGELLALICGLRAAKPWPSLNIFLDSKYLIKYLHSLAIGAFLGTSAHQTLQAALPPLLQGKTIYLHHVRSHTNLPDPISTFNEYTDSLILAPLVPLTPQGLHGLTHCNQRALVSFGATPREAKSLVQTCHTCQTINSQHHMPRGYIRRGLLPNHIWQGDVTHYKYKKYKYCLHVWVDTFSGAVSVSCKKKETSCETISAVLQAISLLGKPLHINTDNGPAFLSQEFQEFCTSYRIKHSTHIPYNPTSSGLVERTNGVIKNLLNKYLLDCPNLPLDNAIHKALWTLNQLNVMNPSGKTRWQIHHSPPLPPIPEASTPPKPPPKWFYYKLPGLTNQRWKGPLQSLQEAAGAALLSIDGSPRWIPWRFLKKAACPRPDASELAEHAATDHQHHG</sequence>
<protein>
    <recommendedName>
        <fullName>Gag-Pro-Pol polyprotein</fullName>
    </recommendedName>
    <alternativeName>
        <fullName>Pr160Gag-Pro-Pol</fullName>
    </alternativeName>
    <component>
        <recommendedName>
            <fullName>Matrix protein p19</fullName>
            <shortName>MA</shortName>
        </recommendedName>
    </component>
    <component>
        <recommendedName>
            <fullName>Capsid protein p24</fullName>
            <shortName>CA</shortName>
        </recommendedName>
    </component>
    <component>
        <recommendedName>
            <fullName>Nucleocapsid protein p15-pro</fullName>
            <shortName>NC'</shortName>
            <shortName>NC-pro</shortName>
        </recommendedName>
    </component>
    <component>
        <recommendedName>
            <fullName>Protease</fullName>
            <shortName>PR</shortName>
            <ecNumber evidence="6">3.4.23.-</ecNumber>
        </recommendedName>
    </component>
    <component>
        <recommendedName>
            <fullName>p1</fullName>
        </recommendedName>
    </component>
    <component>
        <recommendedName>
            <fullName>Reverse transcriptase/ribonuclease H</fullName>
            <shortName>RT</shortName>
            <ecNumber evidence="7">2.7.7.49</ecNumber>
            <ecNumber evidence="7">2.7.7.7</ecNumber>
            <ecNumber evidence="8">3.1.26.4</ecNumber>
        </recommendedName>
    </component>
    <component>
        <recommendedName>
            <fullName>Integrase</fullName>
            <shortName>IN</shortName>
            <ecNumber evidence="17">2.7.7.-</ecNumber>
            <ecNumber evidence="17">3.1.-.-</ecNumber>
        </recommendedName>
    </component>
</protein>
<feature type="initiator methionine" description="Removed; by host" evidence="4">
    <location>
        <position position="1"/>
    </location>
</feature>
<feature type="chain" id="PRO_0000085472" description="Gag-Pro-Pol polyprotein">
    <location>
        <begin position="2"/>
        <end position="1461"/>
    </location>
</feature>
<feature type="chain" id="PRO_0000259946" description="Matrix protein p19">
    <location>
        <begin position="2"/>
        <end position="136"/>
    </location>
</feature>
<feature type="chain" id="PRO_0000259947" description="Capsid protein p24">
    <location>
        <begin position="137"/>
        <end position="350"/>
    </location>
</feature>
<feature type="chain" id="PRO_0000259948" description="Nucleocapsid protein p15-pro">
    <location>
        <begin position="351"/>
        <end position="446"/>
    </location>
</feature>
<feature type="chain" id="PRO_0000261318" description="Protease">
    <location>
        <begin position="447"/>
        <end position="571"/>
    </location>
</feature>
<feature type="peptide" id="PRO_0000259949" description="p1">
    <location>
        <begin position="572"/>
        <end position="579"/>
    </location>
</feature>
<feature type="chain" id="PRO_0000259950" description="Reverse transcriptase/ribonuclease H">
    <location>
        <begin position="580"/>
        <end position="1166"/>
    </location>
</feature>
<feature type="chain" id="PRO_0000259951" description="Integrase">
    <location>
        <begin position="1167"/>
        <end position="1461"/>
    </location>
</feature>
<feature type="domain" description="Peptidase A2" evidence="6">
    <location>
        <begin position="473"/>
        <end position="551"/>
    </location>
</feature>
<feature type="domain" description="Reverse transcriptase" evidence="7">
    <location>
        <begin position="612"/>
        <end position="802"/>
    </location>
</feature>
<feature type="domain" description="RNase H type-1" evidence="8">
    <location>
        <begin position="1029"/>
        <end position="1164"/>
    </location>
</feature>
<feature type="domain" description="Integrase catalytic" evidence="9">
    <location>
        <begin position="1218"/>
        <end position="1387"/>
    </location>
</feature>
<feature type="zinc finger region" description="CCHC-type 1" evidence="5">
    <location>
        <begin position="361"/>
        <end position="378"/>
    </location>
</feature>
<feature type="zinc finger region" description="CCHC-type 2" evidence="5">
    <location>
        <begin position="384"/>
        <end position="401"/>
    </location>
</feature>
<feature type="DNA-binding region" description="Integrase-type" evidence="10">
    <location>
        <begin position="1392"/>
        <end position="1441"/>
    </location>
</feature>
<feature type="region of interest" description="Disordered" evidence="12">
    <location>
        <begin position="94"/>
        <end position="121"/>
    </location>
</feature>
<feature type="region of interest" description="Disordered" evidence="12">
    <location>
        <begin position="399"/>
        <end position="425"/>
    </location>
</feature>
<feature type="short sequence motif" description="PTAP/PSAP motif">
    <location>
        <begin position="94"/>
        <end position="97"/>
    </location>
</feature>
<feature type="short sequence motif" description="PPXY motif" evidence="2">
    <location>
        <begin position="124"/>
        <end position="127"/>
    </location>
</feature>
<feature type="short sequence motif" description="PTAP/PSAP motif" evidence="2">
    <location>
        <begin position="130"/>
        <end position="133"/>
    </location>
</feature>
<feature type="compositionally biased region" description="Pro residues" evidence="12">
    <location>
        <begin position="97"/>
        <end position="121"/>
    </location>
</feature>
<feature type="active site" description="For protease activity; shared with dimeric partner" evidence="11">
    <location>
        <position position="478"/>
    </location>
</feature>
<feature type="binding site" evidence="7">
    <location>
        <position position="678"/>
    </location>
    <ligand>
        <name>Mg(2+)</name>
        <dbReference type="ChEBI" id="CHEBI:18420"/>
        <label>1</label>
        <note>catalytic; for reverse transcriptase activity</note>
    </ligand>
</feature>
<feature type="binding site" evidence="7">
    <location>
        <position position="753"/>
    </location>
    <ligand>
        <name>Mg(2+)</name>
        <dbReference type="ChEBI" id="CHEBI:18420"/>
        <label>1</label>
        <note>catalytic; for reverse transcriptase activity</note>
    </ligand>
</feature>
<feature type="binding site" evidence="7">
    <location>
        <position position="754"/>
    </location>
    <ligand>
        <name>Mg(2+)</name>
        <dbReference type="ChEBI" id="CHEBI:18420"/>
        <label>1</label>
        <note>catalytic; for reverse transcriptase activity</note>
    </ligand>
</feature>
<feature type="binding site" evidence="8">
    <location>
        <position position="1038"/>
    </location>
    <ligand>
        <name>Mg(2+)</name>
        <dbReference type="ChEBI" id="CHEBI:18420"/>
        <label>2</label>
        <note>catalytic; for RNase H activity</note>
    </ligand>
</feature>
<feature type="binding site" evidence="8">
    <location>
        <position position="1073"/>
    </location>
    <ligand>
        <name>Mg(2+)</name>
        <dbReference type="ChEBI" id="CHEBI:18420"/>
        <label>2</label>
        <note>catalytic; for RNase H activity</note>
    </ligand>
</feature>
<feature type="binding site" evidence="8">
    <location>
        <position position="1095"/>
    </location>
    <ligand>
        <name>Mg(2+)</name>
        <dbReference type="ChEBI" id="CHEBI:18420"/>
        <label>2</label>
        <note>catalytic; for RNase H activity</note>
    </ligand>
</feature>
<feature type="binding site" evidence="8">
    <location>
        <position position="1156"/>
    </location>
    <ligand>
        <name>Mg(2+)</name>
        <dbReference type="ChEBI" id="CHEBI:18420"/>
        <label>2</label>
        <note>catalytic; for RNase H activity</note>
    </ligand>
</feature>
<feature type="binding site" evidence="9">
    <location>
        <position position="1229"/>
    </location>
    <ligand>
        <name>Mg(2+)</name>
        <dbReference type="ChEBI" id="CHEBI:18420"/>
        <label>3</label>
        <note>catalytic; for integrase activity</note>
    </ligand>
</feature>
<feature type="binding site" evidence="9">
    <location>
        <position position="1286"/>
    </location>
    <ligand>
        <name>Mg(2+)</name>
        <dbReference type="ChEBI" id="CHEBI:18420"/>
        <label>3</label>
        <note>catalytic; for integrase activity</note>
    </ligand>
</feature>
<feature type="site" description="Cleavage; by viral protease" evidence="3">
    <location>
        <begin position="136"/>
        <end position="137"/>
    </location>
</feature>
<feature type="site" description="Cleavage; by viral protease" evidence="3">
    <location>
        <begin position="350"/>
        <end position="351"/>
    </location>
</feature>
<feature type="site" description="Cleavage; by viral protease" evidence="3">
    <location>
        <begin position="446"/>
        <end position="447"/>
    </location>
</feature>
<feature type="site" description="Cleavage; by viral protease" evidence="3">
    <location>
        <begin position="571"/>
        <end position="572"/>
    </location>
</feature>
<feature type="site" description="Cleavage; by viral protease" evidence="3">
    <location>
        <begin position="579"/>
        <end position="580"/>
    </location>
</feature>
<feature type="site" description="Cleavage; by viral protease" evidence="3">
    <location>
        <begin position="1019"/>
        <end position="1020"/>
    </location>
</feature>
<feature type="site" description="Cleavage; by viral protease" evidence="3">
    <location>
        <begin position="1166"/>
        <end position="1167"/>
    </location>
</feature>
<feature type="lipid moiety-binding region" description="N-myristoyl glycine; by host" evidence="4">
    <location>
        <position position="2"/>
    </location>
</feature>
<feature type="strand" evidence="18">
    <location>
        <begin position="2"/>
        <end position="9"/>
    </location>
</feature>
<feature type="helix" evidence="18">
    <location>
        <begin position="21"/>
        <end position="33"/>
    </location>
</feature>
<feature type="turn" evidence="18">
    <location>
        <begin position="40"/>
        <end position="42"/>
    </location>
</feature>
<feature type="helix" evidence="18">
    <location>
        <begin position="43"/>
        <end position="54"/>
    </location>
</feature>
<feature type="turn" evidence="18">
    <location>
        <begin position="60"/>
        <end position="63"/>
    </location>
</feature>
<feature type="turn" evidence="18">
    <location>
        <begin position="65"/>
        <end position="67"/>
    </location>
</feature>
<feature type="helix" evidence="18">
    <location>
        <begin position="68"/>
        <end position="71"/>
    </location>
</feature>
<feature type="helix" evidence="18">
    <location>
        <begin position="80"/>
        <end position="88"/>
    </location>
</feature>
<feature type="turn" evidence="18">
    <location>
        <begin position="89"/>
        <end position="91"/>
    </location>
</feature>
<feature type="strand" evidence="18">
    <location>
        <begin position="99"/>
        <end position="103"/>
    </location>
</feature>
<feature type="strand" evidence="18">
    <location>
        <begin position="117"/>
        <end position="119"/>
    </location>
</feature>
<feature type="strand" evidence="19">
    <location>
        <begin position="1224"/>
        <end position="1235"/>
    </location>
</feature>
<feature type="strand" evidence="19">
    <location>
        <begin position="1238"/>
        <end position="1247"/>
    </location>
</feature>
<feature type="turn" evidence="19">
    <location>
        <begin position="1248"/>
        <end position="1250"/>
    </location>
</feature>
<feature type="strand" evidence="19">
    <location>
        <begin position="1253"/>
        <end position="1259"/>
    </location>
</feature>
<feature type="helix" evidence="19">
    <location>
        <begin position="1263"/>
        <end position="1277"/>
    </location>
</feature>
<feature type="strand" evidence="19">
    <location>
        <begin position="1281"/>
        <end position="1284"/>
    </location>
</feature>
<feature type="helix" evidence="19">
    <location>
        <begin position="1289"/>
        <end position="1292"/>
    </location>
</feature>
<feature type="helix" evidence="19">
    <location>
        <begin position="1294"/>
        <end position="1302"/>
    </location>
</feature>
<feature type="strand" evidence="19">
    <location>
        <begin position="1306"/>
        <end position="1308"/>
    </location>
</feature>
<feature type="helix" evidence="19">
    <location>
        <begin position="1320"/>
        <end position="1338"/>
    </location>
</feature>
<feature type="strand" evidence="19">
    <location>
        <begin position="1339"/>
        <end position="1342"/>
    </location>
</feature>
<feature type="helix" evidence="19">
    <location>
        <begin position="1344"/>
        <end position="1357"/>
    </location>
</feature>
<feature type="turn" evidence="19">
    <location>
        <begin position="1362"/>
        <end position="1364"/>
    </location>
</feature>
<feature type="helix" evidence="19">
    <location>
        <begin position="1368"/>
        <end position="1372"/>
    </location>
</feature>
<proteinExistence type="evidence at protein level"/>